<sequence length="876" mass="97328">MQRLSSASVRQMFIDFFKEKGHSVEPSASLVPFEDPSLLWINSGVATLKKYFDGRVIPENPRIVNAQKSIRTNDIENVGKTARHHTFFEMLGNFSIGDYFKEQAIEWAWEFLTDKKWIGFPQERLSVTVHPEDEEAYRYWHQHIGLPEERIIRLEGNFWDIGEGPSGPNSEIFYDRGPEYGDDPNDPELYPGGENERYLEIWNLVFSQFNHNADGTYTPLPKKNIDTGMGLERMVSVIQDTPTNFETDLFMPIIEATEALASTTYKEADTAFKVIADHIRTVAFAVGDGALPSNEGRGYVLRRLLRRAVRFAKSIGIDRPFMYELVPVVGAIMKDFYPEVADKQDFIARVIRTEEERFHETLNEGLAILSDIIEKAKATNKETIAGEDAFRLYDTYGFPIDLTEEYVHDEGLTVDRAGFDQEMEQQRQRARAARQESASMSVQEDVFGEVKTPSVFVGYEHTETDAVITTLVRGKEKVEQAVQGDVIQFFLDETPFYAESGGQVADRGMIVTDTGQAVVKDVKKAPNGQHLHTAEVTIGEISTGQQASARIEVRERLDIVKNHTATHLLHQALKDVLGEHVNQAGSLVSSERLRFDFSHFGQVTPNELQQIEEIVNEKVWQALPVDISIQRLEEAKAAGAMALFGEKYGSEVRVVRVGDYSLELCGGCHVRNTAEIGLFKITSESGIGAGVRRIEAVTSKGAYQFLSEQTAILKDAAERLKAKRLSDVPQRIESLQEELRKAQRENESLTAKLGQAEAGNLNDQVKEIGGVAVIAAQVDAKDTEALRSMVDTLKQAHEKAVIVLAAKTGNKLAFVAGVTKPAIAEGFHAGKLIKEVAARTGGGGGGRPDMAQAGGKDPAKLDEALAYVHEYVKSIS</sequence>
<evidence type="ECO:0000255" key="1">
    <source>
        <dbReference type="HAMAP-Rule" id="MF_00036"/>
    </source>
</evidence>
<name>SYA_SHOC1</name>
<gene>
    <name evidence="1" type="primary">alaS</name>
    <name type="ordered locus">ABC1592</name>
</gene>
<comment type="function">
    <text evidence="1">Catalyzes the attachment of alanine to tRNA(Ala) in a two-step reaction: alanine is first activated by ATP to form Ala-AMP and then transferred to the acceptor end of tRNA(Ala). Also edits incorrectly charged Ser-tRNA(Ala) and Gly-tRNA(Ala) via its editing domain.</text>
</comment>
<comment type="catalytic activity">
    <reaction evidence="1">
        <text>tRNA(Ala) + L-alanine + ATP = L-alanyl-tRNA(Ala) + AMP + diphosphate</text>
        <dbReference type="Rhea" id="RHEA:12540"/>
        <dbReference type="Rhea" id="RHEA-COMP:9657"/>
        <dbReference type="Rhea" id="RHEA-COMP:9923"/>
        <dbReference type="ChEBI" id="CHEBI:30616"/>
        <dbReference type="ChEBI" id="CHEBI:33019"/>
        <dbReference type="ChEBI" id="CHEBI:57972"/>
        <dbReference type="ChEBI" id="CHEBI:78442"/>
        <dbReference type="ChEBI" id="CHEBI:78497"/>
        <dbReference type="ChEBI" id="CHEBI:456215"/>
        <dbReference type="EC" id="6.1.1.7"/>
    </reaction>
</comment>
<comment type="cofactor">
    <cofactor evidence="1">
        <name>Zn(2+)</name>
        <dbReference type="ChEBI" id="CHEBI:29105"/>
    </cofactor>
    <text evidence="1">Binds 1 zinc ion per subunit.</text>
</comment>
<comment type="subcellular location">
    <subcellularLocation>
        <location evidence="1">Cytoplasm</location>
    </subcellularLocation>
</comment>
<comment type="domain">
    <text evidence="1">Consists of three domains; the N-terminal catalytic domain, the editing domain and the C-terminal C-Ala domain. The editing domain removes incorrectly charged amino acids, while the C-Ala domain, along with tRNA(Ala), serves as a bridge to cooperatively bring together the editing and aminoacylation centers thus stimulating deacylation of misacylated tRNAs.</text>
</comment>
<comment type="similarity">
    <text evidence="1">Belongs to the class-II aminoacyl-tRNA synthetase family.</text>
</comment>
<reference key="1">
    <citation type="submission" date="2003-10" db="EMBL/GenBank/DDBJ databases">
        <title>The complete genome sequence of the alkaliphilic Bacillus clausii KSM-K16.</title>
        <authorList>
            <person name="Takaki Y."/>
            <person name="Kageyama Y."/>
            <person name="Shimamura S."/>
            <person name="Suzuki H."/>
            <person name="Nishi S."/>
            <person name="Hatada Y."/>
            <person name="Kawai S."/>
            <person name="Ito S."/>
            <person name="Horikoshi K."/>
        </authorList>
    </citation>
    <scope>NUCLEOTIDE SEQUENCE [LARGE SCALE GENOMIC DNA]</scope>
    <source>
        <strain>KSM-K16</strain>
    </source>
</reference>
<dbReference type="EC" id="6.1.1.7" evidence="1"/>
<dbReference type="EMBL" id="AP006627">
    <property type="protein sequence ID" value="BAD64127.1"/>
    <property type="molecule type" value="Genomic_DNA"/>
</dbReference>
<dbReference type="RefSeq" id="WP_011246436.1">
    <property type="nucleotide sequence ID" value="NC_006582.1"/>
</dbReference>
<dbReference type="SMR" id="Q5WHM8"/>
<dbReference type="STRING" id="66692.ABC1592"/>
<dbReference type="KEGG" id="bcl:ABC1592"/>
<dbReference type="eggNOG" id="COG0013">
    <property type="taxonomic scope" value="Bacteria"/>
</dbReference>
<dbReference type="HOGENOM" id="CLU_004485_1_1_9"/>
<dbReference type="OrthoDB" id="9803884at2"/>
<dbReference type="Proteomes" id="UP000001168">
    <property type="component" value="Chromosome"/>
</dbReference>
<dbReference type="GO" id="GO:0005829">
    <property type="term" value="C:cytosol"/>
    <property type="evidence" value="ECO:0007669"/>
    <property type="project" value="TreeGrafter"/>
</dbReference>
<dbReference type="GO" id="GO:0004813">
    <property type="term" value="F:alanine-tRNA ligase activity"/>
    <property type="evidence" value="ECO:0007669"/>
    <property type="project" value="UniProtKB-UniRule"/>
</dbReference>
<dbReference type="GO" id="GO:0002161">
    <property type="term" value="F:aminoacyl-tRNA deacylase activity"/>
    <property type="evidence" value="ECO:0007669"/>
    <property type="project" value="TreeGrafter"/>
</dbReference>
<dbReference type="GO" id="GO:0005524">
    <property type="term" value="F:ATP binding"/>
    <property type="evidence" value="ECO:0007669"/>
    <property type="project" value="UniProtKB-UniRule"/>
</dbReference>
<dbReference type="GO" id="GO:0140096">
    <property type="term" value="F:catalytic activity, acting on a protein"/>
    <property type="evidence" value="ECO:0007669"/>
    <property type="project" value="UniProtKB-ARBA"/>
</dbReference>
<dbReference type="GO" id="GO:0016740">
    <property type="term" value="F:transferase activity"/>
    <property type="evidence" value="ECO:0007669"/>
    <property type="project" value="UniProtKB-ARBA"/>
</dbReference>
<dbReference type="GO" id="GO:0000049">
    <property type="term" value="F:tRNA binding"/>
    <property type="evidence" value="ECO:0007669"/>
    <property type="project" value="UniProtKB-KW"/>
</dbReference>
<dbReference type="GO" id="GO:0008270">
    <property type="term" value="F:zinc ion binding"/>
    <property type="evidence" value="ECO:0007669"/>
    <property type="project" value="UniProtKB-UniRule"/>
</dbReference>
<dbReference type="GO" id="GO:0006419">
    <property type="term" value="P:alanyl-tRNA aminoacylation"/>
    <property type="evidence" value="ECO:0007669"/>
    <property type="project" value="UniProtKB-UniRule"/>
</dbReference>
<dbReference type="CDD" id="cd00673">
    <property type="entry name" value="AlaRS_core"/>
    <property type="match status" value="1"/>
</dbReference>
<dbReference type="FunFam" id="2.40.30.130:FF:000001">
    <property type="entry name" value="Alanine--tRNA ligase"/>
    <property type="match status" value="1"/>
</dbReference>
<dbReference type="FunFam" id="3.10.310.40:FF:000001">
    <property type="entry name" value="Alanine--tRNA ligase"/>
    <property type="match status" value="1"/>
</dbReference>
<dbReference type="FunFam" id="3.30.54.20:FF:000001">
    <property type="entry name" value="Alanine--tRNA ligase"/>
    <property type="match status" value="1"/>
</dbReference>
<dbReference type="FunFam" id="3.30.930.10:FF:000046">
    <property type="entry name" value="Alanine--tRNA ligase"/>
    <property type="match status" value="1"/>
</dbReference>
<dbReference type="FunFam" id="3.30.980.10:FF:000004">
    <property type="entry name" value="Alanine--tRNA ligase, cytoplasmic"/>
    <property type="match status" value="1"/>
</dbReference>
<dbReference type="Gene3D" id="2.40.30.130">
    <property type="match status" value="1"/>
</dbReference>
<dbReference type="Gene3D" id="3.10.310.40">
    <property type="match status" value="1"/>
</dbReference>
<dbReference type="Gene3D" id="3.30.54.20">
    <property type="match status" value="1"/>
</dbReference>
<dbReference type="Gene3D" id="6.10.250.550">
    <property type="match status" value="1"/>
</dbReference>
<dbReference type="Gene3D" id="3.30.930.10">
    <property type="entry name" value="Bira Bifunctional Protein, Domain 2"/>
    <property type="match status" value="1"/>
</dbReference>
<dbReference type="Gene3D" id="3.30.980.10">
    <property type="entry name" value="Threonyl-trna Synthetase, Chain A, domain 2"/>
    <property type="match status" value="1"/>
</dbReference>
<dbReference type="HAMAP" id="MF_00036_B">
    <property type="entry name" value="Ala_tRNA_synth_B"/>
    <property type="match status" value="1"/>
</dbReference>
<dbReference type="InterPro" id="IPR045864">
    <property type="entry name" value="aa-tRNA-synth_II/BPL/LPL"/>
</dbReference>
<dbReference type="InterPro" id="IPR002318">
    <property type="entry name" value="Ala-tRNA-lgiase_IIc"/>
</dbReference>
<dbReference type="InterPro" id="IPR018162">
    <property type="entry name" value="Ala-tRNA-ligase_IIc_anticod-bd"/>
</dbReference>
<dbReference type="InterPro" id="IPR018165">
    <property type="entry name" value="Ala-tRNA-synth_IIc_core"/>
</dbReference>
<dbReference type="InterPro" id="IPR018164">
    <property type="entry name" value="Ala-tRNA-synth_IIc_N"/>
</dbReference>
<dbReference type="InterPro" id="IPR050058">
    <property type="entry name" value="Ala-tRNA_ligase"/>
</dbReference>
<dbReference type="InterPro" id="IPR023033">
    <property type="entry name" value="Ala_tRNA_ligase_euk/bac"/>
</dbReference>
<dbReference type="InterPro" id="IPR003156">
    <property type="entry name" value="DHHA1_dom"/>
</dbReference>
<dbReference type="InterPro" id="IPR018163">
    <property type="entry name" value="Thr/Ala-tRNA-synth_IIc_edit"/>
</dbReference>
<dbReference type="InterPro" id="IPR009000">
    <property type="entry name" value="Transl_B-barrel_sf"/>
</dbReference>
<dbReference type="InterPro" id="IPR012947">
    <property type="entry name" value="tRNA_SAD"/>
</dbReference>
<dbReference type="NCBIfam" id="TIGR00344">
    <property type="entry name" value="alaS"/>
    <property type="match status" value="1"/>
</dbReference>
<dbReference type="PANTHER" id="PTHR11777:SF9">
    <property type="entry name" value="ALANINE--TRNA LIGASE, CYTOPLASMIC"/>
    <property type="match status" value="1"/>
</dbReference>
<dbReference type="PANTHER" id="PTHR11777">
    <property type="entry name" value="ALANYL-TRNA SYNTHETASE"/>
    <property type="match status" value="1"/>
</dbReference>
<dbReference type="Pfam" id="PF02272">
    <property type="entry name" value="DHHA1"/>
    <property type="match status" value="1"/>
</dbReference>
<dbReference type="Pfam" id="PF01411">
    <property type="entry name" value="tRNA-synt_2c"/>
    <property type="match status" value="1"/>
</dbReference>
<dbReference type="Pfam" id="PF07973">
    <property type="entry name" value="tRNA_SAD"/>
    <property type="match status" value="1"/>
</dbReference>
<dbReference type="PRINTS" id="PR00980">
    <property type="entry name" value="TRNASYNTHALA"/>
</dbReference>
<dbReference type="SMART" id="SM00863">
    <property type="entry name" value="tRNA_SAD"/>
    <property type="match status" value="1"/>
</dbReference>
<dbReference type="SUPFAM" id="SSF55681">
    <property type="entry name" value="Class II aaRS and biotin synthetases"/>
    <property type="match status" value="1"/>
</dbReference>
<dbReference type="SUPFAM" id="SSF101353">
    <property type="entry name" value="Putative anticodon-binding domain of alanyl-tRNA synthetase (AlaRS)"/>
    <property type="match status" value="1"/>
</dbReference>
<dbReference type="SUPFAM" id="SSF55186">
    <property type="entry name" value="ThrRS/AlaRS common domain"/>
    <property type="match status" value="1"/>
</dbReference>
<dbReference type="SUPFAM" id="SSF50447">
    <property type="entry name" value="Translation proteins"/>
    <property type="match status" value="1"/>
</dbReference>
<dbReference type="PROSITE" id="PS50860">
    <property type="entry name" value="AA_TRNA_LIGASE_II_ALA"/>
    <property type="match status" value="1"/>
</dbReference>
<feature type="chain" id="PRO_0000075054" description="Alanine--tRNA ligase">
    <location>
        <begin position="1"/>
        <end position="876"/>
    </location>
</feature>
<feature type="binding site" evidence="1">
    <location>
        <position position="563"/>
    </location>
    <ligand>
        <name>Zn(2+)</name>
        <dbReference type="ChEBI" id="CHEBI:29105"/>
    </ligand>
</feature>
<feature type="binding site" evidence="1">
    <location>
        <position position="567"/>
    </location>
    <ligand>
        <name>Zn(2+)</name>
        <dbReference type="ChEBI" id="CHEBI:29105"/>
    </ligand>
</feature>
<feature type="binding site" evidence="1">
    <location>
        <position position="665"/>
    </location>
    <ligand>
        <name>Zn(2+)</name>
        <dbReference type="ChEBI" id="CHEBI:29105"/>
    </ligand>
</feature>
<feature type="binding site" evidence="1">
    <location>
        <position position="669"/>
    </location>
    <ligand>
        <name>Zn(2+)</name>
        <dbReference type="ChEBI" id="CHEBI:29105"/>
    </ligand>
</feature>
<proteinExistence type="inferred from homology"/>
<keyword id="KW-0030">Aminoacyl-tRNA synthetase</keyword>
<keyword id="KW-0067">ATP-binding</keyword>
<keyword id="KW-0963">Cytoplasm</keyword>
<keyword id="KW-0436">Ligase</keyword>
<keyword id="KW-0479">Metal-binding</keyword>
<keyword id="KW-0547">Nucleotide-binding</keyword>
<keyword id="KW-0648">Protein biosynthesis</keyword>
<keyword id="KW-1185">Reference proteome</keyword>
<keyword id="KW-0694">RNA-binding</keyword>
<keyword id="KW-0820">tRNA-binding</keyword>
<keyword id="KW-0862">Zinc</keyword>
<protein>
    <recommendedName>
        <fullName evidence="1">Alanine--tRNA ligase</fullName>
        <ecNumber evidence="1">6.1.1.7</ecNumber>
    </recommendedName>
    <alternativeName>
        <fullName evidence="1">Alanyl-tRNA synthetase</fullName>
        <shortName evidence="1">AlaRS</shortName>
    </alternativeName>
</protein>
<accession>Q5WHM8</accession>
<organism>
    <name type="scientific">Shouchella clausii (strain KSM-K16)</name>
    <name type="common">Alkalihalobacillus clausii</name>
    <dbReference type="NCBI Taxonomy" id="66692"/>
    <lineage>
        <taxon>Bacteria</taxon>
        <taxon>Bacillati</taxon>
        <taxon>Bacillota</taxon>
        <taxon>Bacilli</taxon>
        <taxon>Bacillales</taxon>
        <taxon>Bacillaceae</taxon>
        <taxon>Shouchella</taxon>
    </lineage>
</organism>